<dbReference type="EC" id="6.3.4.5" evidence="1"/>
<dbReference type="EMBL" id="CP000680">
    <property type="protein sequence ID" value="ABP84159.1"/>
    <property type="molecule type" value="Genomic_DNA"/>
</dbReference>
<dbReference type="SMR" id="A4XS43"/>
<dbReference type="STRING" id="399739.Pmen_1394"/>
<dbReference type="KEGG" id="pmy:Pmen_1394"/>
<dbReference type="eggNOG" id="COG0137">
    <property type="taxonomic scope" value="Bacteria"/>
</dbReference>
<dbReference type="HOGENOM" id="CLU_032784_4_2_6"/>
<dbReference type="OrthoDB" id="9801641at2"/>
<dbReference type="UniPathway" id="UPA00068">
    <property type="reaction ID" value="UER00113"/>
</dbReference>
<dbReference type="GO" id="GO:0005737">
    <property type="term" value="C:cytoplasm"/>
    <property type="evidence" value="ECO:0007669"/>
    <property type="project" value="UniProtKB-SubCell"/>
</dbReference>
<dbReference type="GO" id="GO:0004055">
    <property type="term" value="F:argininosuccinate synthase activity"/>
    <property type="evidence" value="ECO:0007669"/>
    <property type="project" value="UniProtKB-UniRule"/>
</dbReference>
<dbReference type="GO" id="GO:0005524">
    <property type="term" value="F:ATP binding"/>
    <property type="evidence" value="ECO:0007669"/>
    <property type="project" value="UniProtKB-UniRule"/>
</dbReference>
<dbReference type="GO" id="GO:0000053">
    <property type="term" value="P:argininosuccinate metabolic process"/>
    <property type="evidence" value="ECO:0007669"/>
    <property type="project" value="TreeGrafter"/>
</dbReference>
<dbReference type="GO" id="GO:0006526">
    <property type="term" value="P:L-arginine biosynthetic process"/>
    <property type="evidence" value="ECO:0007669"/>
    <property type="project" value="UniProtKB-UniRule"/>
</dbReference>
<dbReference type="GO" id="GO:0000050">
    <property type="term" value="P:urea cycle"/>
    <property type="evidence" value="ECO:0007669"/>
    <property type="project" value="TreeGrafter"/>
</dbReference>
<dbReference type="CDD" id="cd01999">
    <property type="entry name" value="ASS"/>
    <property type="match status" value="1"/>
</dbReference>
<dbReference type="FunFam" id="1.20.5.470:FF:000001">
    <property type="entry name" value="Argininosuccinate synthase"/>
    <property type="match status" value="1"/>
</dbReference>
<dbReference type="FunFam" id="3.40.50.620:FF:000019">
    <property type="entry name" value="Argininosuccinate synthase"/>
    <property type="match status" value="1"/>
</dbReference>
<dbReference type="FunFam" id="3.90.1260.10:FF:000007">
    <property type="entry name" value="Argininosuccinate synthase"/>
    <property type="match status" value="1"/>
</dbReference>
<dbReference type="Gene3D" id="3.90.1260.10">
    <property type="entry name" value="Argininosuccinate synthetase, chain A, domain 2"/>
    <property type="match status" value="1"/>
</dbReference>
<dbReference type="Gene3D" id="3.40.50.620">
    <property type="entry name" value="HUPs"/>
    <property type="match status" value="1"/>
</dbReference>
<dbReference type="Gene3D" id="1.20.5.470">
    <property type="entry name" value="Single helix bin"/>
    <property type="match status" value="1"/>
</dbReference>
<dbReference type="HAMAP" id="MF_00005">
    <property type="entry name" value="Arg_succ_synth_type1"/>
    <property type="match status" value="1"/>
</dbReference>
<dbReference type="InterPro" id="IPR048268">
    <property type="entry name" value="Arginosuc_syn_C"/>
</dbReference>
<dbReference type="InterPro" id="IPR048267">
    <property type="entry name" value="Arginosuc_syn_N"/>
</dbReference>
<dbReference type="InterPro" id="IPR001518">
    <property type="entry name" value="Arginosuc_synth"/>
</dbReference>
<dbReference type="InterPro" id="IPR018223">
    <property type="entry name" value="Arginosuc_synth_CS"/>
</dbReference>
<dbReference type="InterPro" id="IPR023434">
    <property type="entry name" value="Arginosuc_synth_type_1_subfam"/>
</dbReference>
<dbReference type="InterPro" id="IPR024074">
    <property type="entry name" value="AS_cat/multimer_dom_body"/>
</dbReference>
<dbReference type="InterPro" id="IPR014729">
    <property type="entry name" value="Rossmann-like_a/b/a_fold"/>
</dbReference>
<dbReference type="NCBIfam" id="TIGR00032">
    <property type="entry name" value="argG"/>
    <property type="match status" value="1"/>
</dbReference>
<dbReference type="NCBIfam" id="NF001770">
    <property type="entry name" value="PRK00509.1"/>
    <property type="match status" value="1"/>
</dbReference>
<dbReference type="PANTHER" id="PTHR11587">
    <property type="entry name" value="ARGININOSUCCINATE SYNTHASE"/>
    <property type="match status" value="1"/>
</dbReference>
<dbReference type="PANTHER" id="PTHR11587:SF2">
    <property type="entry name" value="ARGININOSUCCINATE SYNTHASE"/>
    <property type="match status" value="1"/>
</dbReference>
<dbReference type="Pfam" id="PF20979">
    <property type="entry name" value="Arginosuc_syn_C"/>
    <property type="match status" value="1"/>
</dbReference>
<dbReference type="Pfam" id="PF00764">
    <property type="entry name" value="Arginosuc_synth"/>
    <property type="match status" value="1"/>
</dbReference>
<dbReference type="SUPFAM" id="SSF52402">
    <property type="entry name" value="Adenine nucleotide alpha hydrolases-like"/>
    <property type="match status" value="1"/>
</dbReference>
<dbReference type="SUPFAM" id="SSF69864">
    <property type="entry name" value="Argininosuccinate synthetase, C-terminal domain"/>
    <property type="match status" value="1"/>
</dbReference>
<dbReference type="PROSITE" id="PS00564">
    <property type="entry name" value="ARGININOSUCCIN_SYN_1"/>
    <property type="match status" value="1"/>
</dbReference>
<dbReference type="PROSITE" id="PS00565">
    <property type="entry name" value="ARGININOSUCCIN_SYN_2"/>
    <property type="match status" value="1"/>
</dbReference>
<protein>
    <recommendedName>
        <fullName evidence="1">Argininosuccinate synthase</fullName>
        <ecNumber evidence="1">6.3.4.5</ecNumber>
    </recommendedName>
    <alternativeName>
        <fullName evidence="1">Citrulline--aspartate ligase</fullName>
    </alternativeName>
</protein>
<organism>
    <name type="scientific">Ectopseudomonas mendocina (strain ymp)</name>
    <name type="common">Pseudomonas mendocina</name>
    <dbReference type="NCBI Taxonomy" id="399739"/>
    <lineage>
        <taxon>Bacteria</taxon>
        <taxon>Pseudomonadati</taxon>
        <taxon>Pseudomonadota</taxon>
        <taxon>Gammaproteobacteria</taxon>
        <taxon>Pseudomonadales</taxon>
        <taxon>Pseudomonadaceae</taxon>
        <taxon>Ectopseudomonas</taxon>
    </lineage>
</organism>
<feature type="chain" id="PRO_1000000425" description="Argininosuccinate synthase">
    <location>
        <begin position="1"/>
        <end position="405"/>
    </location>
</feature>
<feature type="binding site" evidence="1">
    <location>
        <begin position="10"/>
        <end position="18"/>
    </location>
    <ligand>
        <name>ATP</name>
        <dbReference type="ChEBI" id="CHEBI:30616"/>
    </ligand>
</feature>
<feature type="binding site" evidence="1">
    <location>
        <position position="37"/>
    </location>
    <ligand>
        <name>ATP</name>
        <dbReference type="ChEBI" id="CHEBI:30616"/>
    </ligand>
</feature>
<feature type="binding site" evidence="1">
    <location>
        <position position="88"/>
    </location>
    <ligand>
        <name>L-citrulline</name>
        <dbReference type="ChEBI" id="CHEBI:57743"/>
    </ligand>
</feature>
<feature type="binding site" evidence="1">
    <location>
        <position position="93"/>
    </location>
    <ligand>
        <name>L-citrulline</name>
        <dbReference type="ChEBI" id="CHEBI:57743"/>
    </ligand>
</feature>
<feature type="binding site" evidence="1">
    <location>
        <position position="118"/>
    </location>
    <ligand>
        <name>ATP</name>
        <dbReference type="ChEBI" id="CHEBI:30616"/>
    </ligand>
</feature>
<feature type="binding site" evidence="1">
    <location>
        <position position="120"/>
    </location>
    <ligand>
        <name>L-aspartate</name>
        <dbReference type="ChEBI" id="CHEBI:29991"/>
    </ligand>
</feature>
<feature type="binding site" evidence="1">
    <location>
        <position position="124"/>
    </location>
    <ligand>
        <name>L-aspartate</name>
        <dbReference type="ChEBI" id="CHEBI:29991"/>
    </ligand>
</feature>
<feature type="binding site" evidence="1">
    <location>
        <position position="124"/>
    </location>
    <ligand>
        <name>L-citrulline</name>
        <dbReference type="ChEBI" id="CHEBI:57743"/>
    </ligand>
</feature>
<feature type="binding site" evidence="1">
    <location>
        <position position="125"/>
    </location>
    <ligand>
        <name>L-aspartate</name>
        <dbReference type="ChEBI" id="CHEBI:29991"/>
    </ligand>
</feature>
<feature type="binding site" evidence="1">
    <location>
        <position position="128"/>
    </location>
    <ligand>
        <name>L-citrulline</name>
        <dbReference type="ChEBI" id="CHEBI:57743"/>
    </ligand>
</feature>
<feature type="binding site" evidence="1">
    <location>
        <position position="179"/>
    </location>
    <ligand>
        <name>L-citrulline</name>
        <dbReference type="ChEBI" id="CHEBI:57743"/>
    </ligand>
</feature>
<feature type="binding site" evidence="1">
    <location>
        <position position="188"/>
    </location>
    <ligand>
        <name>L-citrulline</name>
        <dbReference type="ChEBI" id="CHEBI:57743"/>
    </ligand>
</feature>
<feature type="binding site" evidence="1">
    <location>
        <position position="264"/>
    </location>
    <ligand>
        <name>L-citrulline</name>
        <dbReference type="ChEBI" id="CHEBI:57743"/>
    </ligand>
</feature>
<feature type="binding site" evidence="1">
    <location>
        <position position="276"/>
    </location>
    <ligand>
        <name>L-citrulline</name>
        <dbReference type="ChEBI" id="CHEBI:57743"/>
    </ligand>
</feature>
<name>ASSY_ECTM1</name>
<reference key="1">
    <citation type="submission" date="2007-04" db="EMBL/GenBank/DDBJ databases">
        <title>Complete sequence of Pseudomonas mendocina ymp.</title>
        <authorList>
            <consortium name="US DOE Joint Genome Institute"/>
            <person name="Copeland A."/>
            <person name="Lucas S."/>
            <person name="Lapidus A."/>
            <person name="Barry K."/>
            <person name="Glavina del Rio T."/>
            <person name="Dalin E."/>
            <person name="Tice H."/>
            <person name="Pitluck S."/>
            <person name="Kiss H."/>
            <person name="Brettin T."/>
            <person name="Detter J.C."/>
            <person name="Bruce D."/>
            <person name="Han C."/>
            <person name="Schmutz J."/>
            <person name="Larimer F."/>
            <person name="Land M."/>
            <person name="Hauser L."/>
            <person name="Kyrpides N."/>
            <person name="Mikhailova N."/>
            <person name="Hersman L."/>
            <person name="Dubois J."/>
            <person name="Maurice P."/>
            <person name="Richardson P."/>
        </authorList>
    </citation>
    <scope>NUCLEOTIDE SEQUENCE [LARGE SCALE GENOMIC DNA]</scope>
    <source>
        <strain>ymp</strain>
    </source>
</reference>
<proteinExistence type="inferred from homology"/>
<sequence length="405" mass="45230">MADVKKVVLAYSGGLDTSVILKWLQDTYNCEVVTFTADLGQGEEVEPARAKAQALGVKEIYIDDLREEFVRDFVYPMFRANTIYEGEYLLGTSIARPLIAKRLIEIANETGADAISHGATGKGNDQVRFELGAYALKPGVKVIAPWREWDLLSREKLMDYAEKHAIPIERHGKKKSPYSMDANLLHISYEGGVLEDTWTEHEEDMWRWTKSPEAAPDTPTYIELTYQAGDIVAIDGKAMTPAQVLAELNRIGGENGIGRLDIVENRYVGMKSRGCYETPGGTIMLKAHRAIESITLDREVAHLKDELMPKYASLIYNGFWWSPERLMLQQMIDASQANVNGVVRLKLYKGNVIVTGRKSDDSLFDANIATFEEDGGAYNQQDAAGFIKLNALRMRIAAGKGRKLI</sequence>
<gene>
    <name evidence="1" type="primary">argG</name>
    <name type="ordered locus">Pmen_1394</name>
</gene>
<evidence type="ECO:0000255" key="1">
    <source>
        <dbReference type="HAMAP-Rule" id="MF_00005"/>
    </source>
</evidence>
<keyword id="KW-0028">Amino-acid biosynthesis</keyword>
<keyword id="KW-0055">Arginine biosynthesis</keyword>
<keyword id="KW-0067">ATP-binding</keyword>
<keyword id="KW-0963">Cytoplasm</keyword>
<keyword id="KW-0436">Ligase</keyword>
<keyword id="KW-0547">Nucleotide-binding</keyword>
<comment type="catalytic activity">
    <reaction evidence="1">
        <text>L-citrulline + L-aspartate + ATP = 2-(N(omega)-L-arginino)succinate + AMP + diphosphate + H(+)</text>
        <dbReference type="Rhea" id="RHEA:10932"/>
        <dbReference type="ChEBI" id="CHEBI:15378"/>
        <dbReference type="ChEBI" id="CHEBI:29991"/>
        <dbReference type="ChEBI" id="CHEBI:30616"/>
        <dbReference type="ChEBI" id="CHEBI:33019"/>
        <dbReference type="ChEBI" id="CHEBI:57472"/>
        <dbReference type="ChEBI" id="CHEBI:57743"/>
        <dbReference type="ChEBI" id="CHEBI:456215"/>
        <dbReference type="EC" id="6.3.4.5"/>
    </reaction>
</comment>
<comment type="pathway">
    <text evidence="1">Amino-acid biosynthesis; L-arginine biosynthesis; L-arginine from L-ornithine and carbamoyl phosphate: step 2/3.</text>
</comment>
<comment type="subunit">
    <text evidence="1">Homotetramer.</text>
</comment>
<comment type="subcellular location">
    <subcellularLocation>
        <location evidence="1">Cytoplasm</location>
    </subcellularLocation>
</comment>
<comment type="similarity">
    <text evidence="1">Belongs to the argininosuccinate synthase family. Type 1 subfamily.</text>
</comment>
<accession>A4XS43</accession>